<evidence type="ECO:0000255" key="1">
    <source>
        <dbReference type="HAMAP-Rule" id="MF_01343"/>
    </source>
</evidence>
<evidence type="ECO:0000305" key="2"/>
<proteinExistence type="inferred from homology"/>
<organism>
    <name type="scientific">Acidothermus cellulolyticus (strain ATCC 43068 / DSM 8971 / 11B)</name>
    <dbReference type="NCBI Taxonomy" id="351607"/>
    <lineage>
        <taxon>Bacteria</taxon>
        <taxon>Bacillati</taxon>
        <taxon>Actinomycetota</taxon>
        <taxon>Actinomycetes</taxon>
        <taxon>Acidothermales</taxon>
        <taxon>Acidothermaceae</taxon>
        <taxon>Acidothermus</taxon>
    </lineage>
</organism>
<comment type="function">
    <text evidence="1">One of the primary rRNA binding proteins, it binds directly to 16S rRNA where it helps nucleate assembly of the platform of the 30S subunit by binding and bridging several RNA helices of the 16S rRNA.</text>
</comment>
<comment type="function">
    <text evidence="1">Forms an intersubunit bridge (bridge B4) with the 23S rRNA of the 50S subunit in the ribosome.</text>
</comment>
<comment type="subunit">
    <text evidence="1">Part of the 30S ribosomal subunit. Forms a bridge to the 50S subunit in the 70S ribosome, contacting the 23S rRNA.</text>
</comment>
<comment type="similarity">
    <text evidence="1">Belongs to the universal ribosomal protein uS15 family.</text>
</comment>
<feature type="chain" id="PRO_1000054738" description="Small ribosomal subunit protein uS15">
    <location>
        <begin position="1"/>
        <end position="89"/>
    </location>
</feature>
<dbReference type="EMBL" id="CP000481">
    <property type="protein sequence ID" value="ABK53281.1"/>
    <property type="molecule type" value="Genomic_DNA"/>
</dbReference>
<dbReference type="RefSeq" id="WP_011720344.1">
    <property type="nucleotide sequence ID" value="NC_008578.1"/>
</dbReference>
<dbReference type="SMR" id="A0LV21"/>
<dbReference type="FunCoup" id="A0LV21">
    <property type="interactions" value="168"/>
</dbReference>
<dbReference type="STRING" id="351607.Acel_1509"/>
<dbReference type="KEGG" id="ace:Acel_1509"/>
<dbReference type="eggNOG" id="COG0184">
    <property type="taxonomic scope" value="Bacteria"/>
</dbReference>
<dbReference type="HOGENOM" id="CLU_148518_0_0_11"/>
<dbReference type="InParanoid" id="A0LV21"/>
<dbReference type="OrthoDB" id="9799262at2"/>
<dbReference type="Proteomes" id="UP000008221">
    <property type="component" value="Chromosome"/>
</dbReference>
<dbReference type="GO" id="GO:0022627">
    <property type="term" value="C:cytosolic small ribosomal subunit"/>
    <property type="evidence" value="ECO:0007669"/>
    <property type="project" value="TreeGrafter"/>
</dbReference>
<dbReference type="GO" id="GO:0019843">
    <property type="term" value="F:rRNA binding"/>
    <property type="evidence" value="ECO:0007669"/>
    <property type="project" value="UniProtKB-UniRule"/>
</dbReference>
<dbReference type="GO" id="GO:0003735">
    <property type="term" value="F:structural constituent of ribosome"/>
    <property type="evidence" value="ECO:0007669"/>
    <property type="project" value="InterPro"/>
</dbReference>
<dbReference type="GO" id="GO:0006412">
    <property type="term" value="P:translation"/>
    <property type="evidence" value="ECO:0007669"/>
    <property type="project" value="UniProtKB-UniRule"/>
</dbReference>
<dbReference type="CDD" id="cd00353">
    <property type="entry name" value="Ribosomal_S15p_S13e"/>
    <property type="match status" value="1"/>
</dbReference>
<dbReference type="FunFam" id="1.10.287.10:FF:000002">
    <property type="entry name" value="30S ribosomal protein S15"/>
    <property type="match status" value="1"/>
</dbReference>
<dbReference type="Gene3D" id="6.10.250.3130">
    <property type="match status" value="1"/>
</dbReference>
<dbReference type="Gene3D" id="1.10.287.10">
    <property type="entry name" value="S15/NS1, RNA-binding"/>
    <property type="match status" value="1"/>
</dbReference>
<dbReference type="HAMAP" id="MF_01343_B">
    <property type="entry name" value="Ribosomal_uS15_B"/>
    <property type="match status" value="1"/>
</dbReference>
<dbReference type="InterPro" id="IPR000589">
    <property type="entry name" value="Ribosomal_uS15"/>
</dbReference>
<dbReference type="InterPro" id="IPR005290">
    <property type="entry name" value="Ribosomal_uS15_bac-type"/>
</dbReference>
<dbReference type="InterPro" id="IPR009068">
    <property type="entry name" value="uS15_NS1_RNA-bd_sf"/>
</dbReference>
<dbReference type="NCBIfam" id="TIGR00952">
    <property type="entry name" value="S15_bact"/>
    <property type="match status" value="1"/>
</dbReference>
<dbReference type="PANTHER" id="PTHR23321">
    <property type="entry name" value="RIBOSOMAL PROTEIN S15, BACTERIAL AND ORGANELLAR"/>
    <property type="match status" value="1"/>
</dbReference>
<dbReference type="PANTHER" id="PTHR23321:SF26">
    <property type="entry name" value="SMALL RIBOSOMAL SUBUNIT PROTEIN US15M"/>
    <property type="match status" value="1"/>
</dbReference>
<dbReference type="Pfam" id="PF00312">
    <property type="entry name" value="Ribosomal_S15"/>
    <property type="match status" value="1"/>
</dbReference>
<dbReference type="SMART" id="SM01387">
    <property type="entry name" value="Ribosomal_S15"/>
    <property type="match status" value="1"/>
</dbReference>
<dbReference type="SUPFAM" id="SSF47060">
    <property type="entry name" value="S15/NS1 RNA-binding domain"/>
    <property type="match status" value="1"/>
</dbReference>
<dbReference type="PROSITE" id="PS00362">
    <property type="entry name" value="RIBOSOMAL_S15"/>
    <property type="match status" value="1"/>
</dbReference>
<reference key="1">
    <citation type="journal article" date="2009" name="Genome Res.">
        <title>Complete genome of the cellulolytic thermophile Acidothermus cellulolyticus 11B provides insights into its ecophysiological and evolutionary adaptations.</title>
        <authorList>
            <person name="Barabote R.D."/>
            <person name="Xie G."/>
            <person name="Leu D.H."/>
            <person name="Normand P."/>
            <person name="Necsulea A."/>
            <person name="Daubin V."/>
            <person name="Medigue C."/>
            <person name="Adney W.S."/>
            <person name="Xu X.C."/>
            <person name="Lapidus A."/>
            <person name="Parales R.E."/>
            <person name="Detter C."/>
            <person name="Pujic P."/>
            <person name="Bruce D."/>
            <person name="Lavire C."/>
            <person name="Challacombe J.F."/>
            <person name="Brettin T.S."/>
            <person name="Berry A.M."/>
        </authorList>
    </citation>
    <scope>NUCLEOTIDE SEQUENCE [LARGE SCALE GENOMIC DNA]</scope>
    <source>
        <strain>ATCC 43068 / DSM 8971 / 11B</strain>
    </source>
</reference>
<accession>A0LV21</accession>
<sequence length="89" mass="10382">MALDTATKRSILAEYATTEGDTGSPEVQVALLTRRITDLTEHLKVHRHDHHSRRGLLLLVGRRRRLLRYLAKKDIARYRSLIERLGLRR</sequence>
<gene>
    <name evidence="1" type="primary">rpsO</name>
    <name type="ordered locus">Acel_1509</name>
</gene>
<keyword id="KW-1185">Reference proteome</keyword>
<keyword id="KW-0687">Ribonucleoprotein</keyword>
<keyword id="KW-0689">Ribosomal protein</keyword>
<keyword id="KW-0694">RNA-binding</keyword>
<keyword id="KW-0699">rRNA-binding</keyword>
<protein>
    <recommendedName>
        <fullName evidence="1">Small ribosomal subunit protein uS15</fullName>
    </recommendedName>
    <alternativeName>
        <fullName evidence="2">30S ribosomal protein S15</fullName>
    </alternativeName>
</protein>
<name>RS15_ACIC1</name>